<evidence type="ECO:0000255" key="1">
    <source>
        <dbReference type="HAMAP-Rule" id="MF_00052"/>
    </source>
</evidence>
<evidence type="ECO:0000255" key="2">
    <source>
        <dbReference type="PROSITE-ProRule" id="PRU01319"/>
    </source>
</evidence>
<organism>
    <name type="scientific">Marinobacter nauticus (strain ATCC 700491 / DSM 11845 / VT8)</name>
    <name type="common">Marinobacter aquaeolei</name>
    <dbReference type="NCBI Taxonomy" id="351348"/>
    <lineage>
        <taxon>Bacteria</taxon>
        <taxon>Pseudomonadati</taxon>
        <taxon>Pseudomonadota</taxon>
        <taxon>Gammaproteobacteria</taxon>
        <taxon>Pseudomonadales</taxon>
        <taxon>Marinobacteraceae</taxon>
        <taxon>Marinobacter</taxon>
    </lineage>
</organism>
<dbReference type="EC" id="3.1.26.4" evidence="1"/>
<dbReference type="EMBL" id="CP000514">
    <property type="protein sequence ID" value="ABM19609.1"/>
    <property type="molecule type" value="Genomic_DNA"/>
</dbReference>
<dbReference type="RefSeq" id="WP_011785993.1">
    <property type="nucleotide sequence ID" value="NC_008740.1"/>
</dbReference>
<dbReference type="SMR" id="A1U3P0"/>
<dbReference type="STRING" id="351348.Maqu_2534"/>
<dbReference type="KEGG" id="maq:Maqu_2534"/>
<dbReference type="eggNOG" id="COG0164">
    <property type="taxonomic scope" value="Bacteria"/>
</dbReference>
<dbReference type="HOGENOM" id="CLU_036532_3_2_6"/>
<dbReference type="OrthoDB" id="9803420at2"/>
<dbReference type="Proteomes" id="UP000000998">
    <property type="component" value="Chromosome"/>
</dbReference>
<dbReference type="GO" id="GO:0005737">
    <property type="term" value="C:cytoplasm"/>
    <property type="evidence" value="ECO:0007669"/>
    <property type="project" value="UniProtKB-SubCell"/>
</dbReference>
<dbReference type="GO" id="GO:0032299">
    <property type="term" value="C:ribonuclease H2 complex"/>
    <property type="evidence" value="ECO:0007669"/>
    <property type="project" value="TreeGrafter"/>
</dbReference>
<dbReference type="GO" id="GO:0030145">
    <property type="term" value="F:manganese ion binding"/>
    <property type="evidence" value="ECO:0007669"/>
    <property type="project" value="UniProtKB-UniRule"/>
</dbReference>
<dbReference type="GO" id="GO:0003723">
    <property type="term" value="F:RNA binding"/>
    <property type="evidence" value="ECO:0007669"/>
    <property type="project" value="InterPro"/>
</dbReference>
<dbReference type="GO" id="GO:0004523">
    <property type="term" value="F:RNA-DNA hybrid ribonuclease activity"/>
    <property type="evidence" value="ECO:0007669"/>
    <property type="project" value="UniProtKB-UniRule"/>
</dbReference>
<dbReference type="GO" id="GO:0043137">
    <property type="term" value="P:DNA replication, removal of RNA primer"/>
    <property type="evidence" value="ECO:0007669"/>
    <property type="project" value="TreeGrafter"/>
</dbReference>
<dbReference type="GO" id="GO:0006298">
    <property type="term" value="P:mismatch repair"/>
    <property type="evidence" value="ECO:0007669"/>
    <property type="project" value="TreeGrafter"/>
</dbReference>
<dbReference type="CDD" id="cd07182">
    <property type="entry name" value="RNase_HII_bacteria_HII_like"/>
    <property type="match status" value="1"/>
</dbReference>
<dbReference type="FunFam" id="3.30.420.10:FF:000006">
    <property type="entry name" value="Ribonuclease HII"/>
    <property type="match status" value="1"/>
</dbReference>
<dbReference type="Gene3D" id="3.30.420.10">
    <property type="entry name" value="Ribonuclease H-like superfamily/Ribonuclease H"/>
    <property type="match status" value="1"/>
</dbReference>
<dbReference type="HAMAP" id="MF_00052_B">
    <property type="entry name" value="RNase_HII_B"/>
    <property type="match status" value="1"/>
</dbReference>
<dbReference type="InterPro" id="IPR022898">
    <property type="entry name" value="RNase_HII"/>
</dbReference>
<dbReference type="InterPro" id="IPR001352">
    <property type="entry name" value="RNase_HII/HIII"/>
</dbReference>
<dbReference type="InterPro" id="IPR024567">
    <property type="entry name" value="RNase_HII/HIII_dom"/>
</dbReference>
<dbReference type="InterPro" id="IPR012337">
    <property type="entry name" value="RNaseH-like_sf"/>
</dbReference>
<dbReference type="InterPro" id="IPR036397">
    <property type="entry name" value="RNaseH_sf"/>
</dbReference>
<dbReference type="NCBIfam" id="NF000595">
    <property type="entry name" value="PRK00015.1-3"/>
    <property type="match status" value="1"/>
</dbReference>
<dbReference type="NCBIfam" id="NF000596">
    <property type="entry name" value="PRK00015.1-4"/>
    <property type="match status" value="1"/>
</dbReference>
<dbReference type="PANTHER" id="PTHR10954">
    <property type="entry name" value="RIBONUCLEASE H2 SUBUNIT A"/>
    <property type="match status" value="1"/>
</dbReference>
<dbReference type="PANTHER" id="PTHR10954:SF18">
    <property type="entry name" value="RIBONUCLEASE HII"/>
    <property type="match status" value="1"/>
</dbReference>
<dbReference type="Pfam" id="PF01351">
    <property type="entry name" value="RNase_HII"/>
    <property type="match status" value="1"/>
</dbReference>
<dbReference type="SUPFAM" id="SSF53098">
    <property type="entry name" value="Ribonuclease H-like"/>
    <property type="match status" value="1"/>
</dbReference>
<dbReference type="PROSITE" id="PS51975">
    <property type="entry name" value="RNASE_H_2"/>
    <property type="match status" value="1"/>
</dbReference>
<feature type="chain" id="PRO_0000334917" description="Ribonuclease HII">
    <location>
        <begin position="1"/>
        <end position="227"/>
    </location>
</feature>
<feature type="domain" description="RNase H type-2" evidence="2">
    <location>
        <begin position="16"/>
        <end position="205"/>
    </location>
</feature>
<feature type="binding site" evidence="1">
    <location>
        <position position="22"/>
    </location>
    <ligand>
        <name>a divalent metal cation</name>
        <dbReference type="ChEBI" id="CHEBI:60240"/>
    </ligand>
</feature>
<feature type="binding site" evidence="1">
    <location>
        <position position="23"/>
    </location>
    <ligand>
        <name>a divalent metal cation</name>
        <dbReference type="ChEBI" id="CHEBI:60240"/>
    </ligand>
</feature>
<feature type="binding site" evidence="1">
    <location>
        <position position="114"/>
    </location>
    <ligand>
        <name>a divalent metal cation</name>
        <dbReference type="ChEBI" id="CHEBI:60240"/>
    </ligand>
</feature>
<gene>
    <name evidence="1" type="primary">rnhB</name>
    <name type="ordered locus">Maqu_2534</name>
</gene>
<comment type="function">
    <text evidence="1">Endonuclease that specifically degrades the RNA of RNA-DNA hybrids.</text>
</comment>
<comment type="catalytic activity">
    <reaction evidence="1">
        <text>Endonucleolytic cleavage to 5'-phosphomonoester.</text>
        <dbReference type="EC" id="3.1.26.4"/>
    </reaction>
</comment>
<comment type="cofactor">
    <cofactor evidence="1">
        <name>Mn(2+)</name>
        <dbReference type="ChEBI" id="CHEBI:29035"/>
    </cofactor>
    <cofactor evidence="1">
        <name>Mg(2+)</name>
        <dbReference type="ChEBI" id="CHEBI:18420"/>
    </cofactor>
    <text evidence="1">Manganese or magnesium. Binds 1 divalent metal ion per monomer in the absence of substrate. May bind a second metal ion after substrate binding.</text>
</comment>
<comment type="subcellular location">
    <subcellularLocation>
        <location evidence="1">Cytoplasm</location>
    </subcellularLocation>
</comment>
<comment type="similarity">
    <text evidence="1">Belongs to the RNase HII family.</text>
</comment>
<name>RNH2_MARN8</name>
<keyword id="KW-0963">Cytoplasm</keyword>
<keyword id="KW-0255">Endonuclease</keyword>
<keyword id="KW-0378">Hydrolase</keyword>
<keyword id="KW-0464">Manganese</keyword>
<keyword id="KW-0479">Metal-binding</keyword>
<keyword id="KW-0540">Nuclease</keyword>
<reference key="1">
    <citation type="journal article" date="2011" name="Appl. Environ. Microbiol.">
        <title>Genomic potential of Marinobacter aquaeolei, a biogeochemical 'opportunitroph'.</title>
        <authorList>
            <person name="Singer E."/>
            <person name="Webb E.A."/>
            <person name="Nelson W.C."/>
            <person name="Heidelberg J.F."/>
            <person name="Ivanova N."/>
            <person name="Pati A."/>
            <person name="Edwards K.J."/>
        </authorList>
    </citation>
    <scope>NUCLEOTIDE SEQUENCE [LARGE SCALE GENOMIC DNA]</scope>
    <source>
        <strain>ATCC 700491 / DSM 11845 / VT8</strain>
    </source>
</reference>
<protein>
    <recommendedName>
        <fullName evidence="1">Ribonuclease HII</fullName>
        <shortName evidence="1">RNase HII</shortName>
        <ecNumber evidence="1">3.1.26.4</ecNumber>
    </recommendedName>
</protein>
<sequence length="227" mass="24757">MAAKAFPPFECSYRGSLLAGVDEVGRGPLIGAVVTAAVILDPARPIPGLADSKKLTEKKRLRLYDDILENAAAWSLGRCEASEIDELNIYQATMLAMKRAVEGLSIAPEYVLVDGNRCPKWQWPSEPVIKGDSRVEAISAASILAKVTRDREMEALDVRFPGFGLAQHKGYPTPVHLEALNRLGVTPEHRRSFRPVKMALDAVGVYGGSSAPVQELNYPADLFENID</sequence>
<accession>A1U3P0</accession>
<proteinExistence type="inferred from homology"/>